<sequence length="216" mass="23776">MKFFLDTANIEEIKEAYSLGVISGVTTNPSLVAKEGRDFKEVIREIAEIVDGPISAEVISDDHEGMVKEARELAKIHKNIVIKIPMTAEGLKAVNILSKEGIKTNVTLIFSANQALLAARAGATYVSPFVGRLDDINTDGMQIIEDIVTIFTNYDIQAEIITASVRHPIHVLEAAKLGAHIATVPYKVLMQMIKHPLTDIGIERFKEDWKKAGLKI</sequence>
<comment type="function">
    <text evidence="1">Transaldolase is important for the balance of metabolites in the pentose-phosphate pathway.</text>
</comment>
<comment type="catalytic activity">
    <reaction evidence="1">
        <text>D-sedoheptulose 7-phosphate + D-glyceraldehyde 3-phosphate = D-erythrose 4-phosphate + beta-D-fructose 6-phosphate</text>
        <dbReference type="Rhea" id="RHEA:17053"/>
        <dbReference type="ChEBI" id="CHEBI:16897"/>
        <dbReference type="ChEBI" id="CHEBI:57483"/>
        <dbReference type="ChEBI" id="CHEBI:57634"/>
        <dbReference type="ChEBI" id="CHEBI:59776"/>
        <dbReference type="EC" id="2.2.1.2"/>
    </reaction>
</comment>
<comment type="pathway">
    <text evidence="1">Carbohydrate degradation; pentose phosphate pathway; D-glyceraldehyde 3-phosphate and beta-D-fructose 6-phosphate from D-ribose 5-phosphate and D-xylulose 5-phosphate (non-oxidative stage): step 2/3.</text>
</comment>
<comment type="subcellular location">
    <subcellularLocation>
        <location evidence="1">Cytoplasm</location>
    </subcellularLocation>
</comment>
<comment type="similarity">
    <text evidence="1">Belongs to the transaldolase family. Type 3B subfamily.</text>
</comment>
<evidence type="ECO:0000255" key="1">
    <source>
        <dbReference type="HAMAP-Rule" id="MF_00494"/>
    </source>
</evidence>
<reference key="1">
    <citation type="journal article" date="2002" name="Genome Res.">
        <title>A complete sequence of the T. tengcongensis genome.</title>
        <authorList>
            <person name="Bao Q."/>
            <person name="Tian Y."/>
            <person name="Li W."/>
            <person name="Xu Z."/>
            <person name="Xuan Z."/>
            <person name="Hu S."/>
            <person name="Dong W."/>
            <person name="Yang J."/>
            <person name="Chen Y."/>
            <person name="Xue Y."/>
            <person name="Xu Y."/>
            <person name="Lai X."/>
            <person name="Huang L."/>
            <person name="Dong X."/>
            <person name="Ma Y."/>
            <person name="Ling L."/>
            <person name="Tan H."/>
            <person name="Chen R."/>
            <person name="Wang J."/>
            <person name="Yu J."/>
            <person name="Yang H."/>
        </authorList>
    </citation>
    <scope>NUCLEOTIDE SEQUENCE [LARGE SCALE GENOMIC DNA]</scope>
    <source>
        <strain>DSM 15242 / JCM 11007 / NBRC 100824 / MB4</strain>
    </source>
</reference>
<gene>
    <name evidence="1" type="primary">tal</name>
    <name type="ordered locus">TTE1918</name>
</gene>
<dbReference type="EC" id="2.2.1.2" evidence="1"/>
<dbReference type="EMBL" id="AE008691">
    <property type="protein sequence ID" value="AAM25098.1"/>
    <property type="molecule type" value="Genomic_DNA"/>
</dbReference>
<dbReference type="SMR" id="Q8R8S6"/>
<dbReference type="STRING" id="273068.TTE1918"/>
<dbReference type="KEGG" id="tte:TTE1918"/>
<dbReference type="eggNOG" id="COG0176">
    <property type="taxonomic scope" value="Bacteria"/>
</dbReference>
<dbReference type="HOGENOM" id="CLU_079764_0_0_9"/>
<dbReference type="OrthoDB" id="9807051at2"/>
<dbReference type="UniPathway" id="UPA00115">
    <property type="reaction ID" value="UER00414"/>
</dbReference>
<dbReference type="Proteomes" id="UP000000555">
    <property type="component" value="Chromosome"/>
</dbReference>
<dbReference type="GO" id="GO:0005737">
    <property type="term" value="C:cytoplasm"/>
    <property type="evidence" value="ECO:0007669"/>
    <property type="project" value="UniProtKB-SubCell"/>
</dbReference>
<dbReference type="GO" id="GO:0016832">
    <property type="term" value="F:aldehyde-lyase activity"/>
    <property type="evidence" value="ECO:0007669"/>
    <property type="project" value="InterPro"/>
</dbReference>
<dbReference type="GO" id="GO:0004801">
    <property type="term" value="F:transaldolase activity"/>
    <property type="evidence" value="ECO:0007669"/>
    <property type="project" value="UniProtKB-UniRule"/>
</dbReference>
<dbReference type="GO" id="GO:0005975">
    <property type="term" value="P:carbohydrate metabolic process"/>
    <property type="evidence" value="ECO:0007669"/>
    <property type="project" value="InterPro"/>
</dbReference>
<dbReference type="GO" id="GO:0006098">
    <property type="term" value="P:pentose-phosphate shunt"/>
    <property type="evidence" value="ECO:0007669"/>
    <property type="project" value="UniProtKB-UniRule"/>
</dbReference>
<dbReference type="CDD" id="cd00956">
    <property type="entry name" value="Transaldolase_FSA"/>
    <property type="match status" value="1"/>
</dbReference>
<dbReference type="FunFam" id="3.20.20.70:FF:000018">
    <property type="entry name" value="Probable transaldolase"/>
    <property type="match status" value="1"/>
</dbReference>
<dbReference type="Gene3D" id="3.20.20.70">
    <property type="entry name" value="Aldolase class I"/>
    <property type="match status" value="1"/>
</dbReference>
<dbReference type="HAMAP" id="MF_00494">
    <property type="entry name" value="Transaldolase_3b"/>
    <property type="match status" value="1"/>
</dbReference>
<dbReference type="InterPro" id="IPR013785">
    <property type="entry name" value="Aldolase_TIM"/>
</dbReference>
<dbReference type="InterPro" id="IPR001585">
    <property type="entry name" value="TAL/FSA"/>
</dbReference>
<dbReference type="InterPro" id="IPR022999">
    <property type="entry name" value="Transaldolase_3B"/>
</dbReference>
<dbReference type="InterPro" id="IPR004731">
    <property type="entry name" value="Transaldolase_3B/F6P_aldolase"/>
</dbReference>
<dbReference type="InterPro" id="IPR018225">
    <property type="entry name" value="Transaldolase_AS"/>
</dbReference>
<dbReference type="InterPro" id="IPR033919">
    <property type="entry name" value="TSA/FSA_arc/bac"/>
</dbReference>
<dbReference type="NCBIfam" id="TIGR00875">
    <property type="entry name" value="fsa_talC_mipB"/>
    <property type="match status" value="1"/>
</dbReference>
<dbReference type="PANTHER" id="PTHR10683">
    <property type="entry name" value="TRANSALDOLASE"/>
    <property type="match status" value="1"/>
</dbReference>
<dbReference type="PANTHER" id="PTHR10683:SF36">
    <property type="entry name" value="TRANSALDOLASE"/>
    <property type="match status" value="1"/>
</dbReference>
<dbReference type="Pfam" id="PF00923">
    <property type="entry name" value="TAL_FSA"/>
    <property type="match status" value="1"/>
</dbReference>
<dbReference type="SUPFAM" id="SSF51569">
    <property type="entry name" value="Aldolase"/>
    <property type="match status" value="1"/>
</dbReference>
<dbReference type="PROSITE" id="PS01054">
    <property type="entry name" value="TRANSALDOLASE_1"/>
    <property type="match status" value="1"/>
</dbReference>
<keyword id="KW-0963">Cytoplasm</keyword>
<keyword id="KW-0570">Pentose shunt</keyword>
<keyword id="KW-1185">Reference proteome</keyword>
<keyword id="KW-0704">Schiff base</keyword>
<keyword id="KW-0808">Transferase</keyword>
<organism>
    <name type="scientific">Caldanaerobacter subterraneus subsp. tengcongensis (strain DSM 15242 / JCM 11007 / NBRC 100824 / MB4)</name>
    <name type="common">Thermoanaerobacter tengcongensis</name>
    <dbReference type="NCBI Taxonomy" id="273068"/>
    <lineage>
        <taxon>Bacteria</taxon>
        <taxon>Bacillati</taxon>
        <taxon>Bacillota</taxon>
        <taxon>Clostridia</taxon>
        <taxon>Thermoanaerobacterales</taxon>
        <taxon>Thermoanaerobacteraceae</taxon>
        <taxon>Caldanaerobacter</taxon>
    </lineage>
</organism>
<proteinExistence type="inferred from homology"/>
<accession>Q8R8S6</accession>
<protein>
    <recommendedName>
        <fullName evidence="1">Probable transaldolase</fullName>
        <ecNumber evidence="1">2.2.1.2</ecNumber>
    </recommendedName>
</protein>
<feature type="chain" id="PRO_0000173688" description="Probable transaldolase">
    <location>
        <begin position="1"/>
        <end position="216"/>
    </location>
</feature>
<feature type="active site" description="Schiff-base intermediate with substrate" evidence="1">
    <location>
        <position position="83"/>
    </location>
</feature>
<name>TAL_CALS4</name>